<reference key="1">
    <citation type="journal article" date="2007" name="PLoS ONE">
        <title>Genome sequencing shows that European isolates of Francisella tularensis subspecies tularensis are almost identical to US laboratory strain Schu S4.</title>
        <authorList>
            <person name="Chaudhuri R.R."/>
            <person name="Ren C.-P."/>
            <person name="Desmond L."/>
            <person name="Vincent G.A."/>
            <person name="Silman N.J."/>
            <person name="Brehm J.K."/>
            <person name="Elmore M.J."/>
            <person name="Hudson M.J."/>
            <person name="Forsman M."/>
            <person name="Isherwood K.E."/>
            <person name="Gurycova D."/>
            <person name="Minton N.P."/>
            <person name="Titball R.W."/>
            <person name="Pallen M.J."/>
            <person name="Vipond R."/>
        </authorList>
    </citation>
    <scope>NUCLEOTIDE SEQUENCE [LARGE SCALE GENOMIC DNA]</scope>
    <source>
        <strain>FSC 198</strain>
    </source>
</reference>
<proteinExistence type="inferred from homology"/>
<comment type="function">
    <text evidence="1">One of the primary rRNA binding proteins, it binds specifically to the 5'-end of 16S ribosomal RNA.</text>
</comment>
<comment type="subunit">
    <text evidence="1">Part of the 30S ribosomal subunit.</text>
</comment>
<comment type="similarity">
    <text evidence="1">Belongs to the universal ribosomal protein uS17 family.</text>
</comment>
<organism>
    <name type="scientific">Francisella tularensis subsp. tularensis (strain FSC 198)</name>
    <dbReference type="NCBI Taxonomy" id="393115"/>
    <lineage>
        <taxon>Bacteria</taxon>
        <taxon>Pseudomonadati</taxon>
        <taxon>Pseudomonadota</taxon>
        <taxon>Gammaproteobacteria</taxon>
        <taxon>Thiotrichales</taxon>
        <taxon>Francisellaceae</taxon>
        <taxon>Francisella</taxon>
    </lineage>
</organism>
<gene>
    <name evidence="1" type="primary">rpsQ</name>
    <name type="ordered locus">FTF0334</name>
</gene>
<feature type="chain" id="PRO_1000054952" description="Small ribosomal subunit protein uS17">
    <location>
        <begin position="1"/>
        <end position="83"/>
    </location>
</feature>
<protein>
    <recommendedName>
        <fullName evidence="1">Small ribosomal subunit protein uS17</fullName>
    </recommendedName>
    <alternativeName>
        <fullName evidence="2">30S ribosomal protein S17</fullName>
    </alternativeName>
</protein>
<evidence type="ECO:0000255" key="1">
    <source>
        <dbReference type="HAMAP-Rule" id="MF_01345"/>
    </source>
</evidence>
<evidence type="ECO:0000305" key="2"/>
<name>RS17_FRAT1</name>
<keyword id="KW-0687">Ribonucleoprotein</keyword>
<keyword id="KW-0689">Ribosomal protein</keyword>
<keyword id="KW-0694">RNA-binding</keyword>
<keyword id="KW-0699">rRNA-binding</keyword>
<dbReference type="EMBL" id="AM286280">
    <property type="protein sequence ID" value="CAL08350.1"/>
    <property type="molecule type" value="Genomic_DNA"/>
</dbReference>
<dbReference type="RefSeq" id="WP_003017803.1">
    <property type="nucleotide sequence ID" value="NC_008245.1"/>
</dbReference>
<dbReference type="SMR" id="Q14JB1"/>
<dbReference type="GeneID" id="75264252"/>
<dbReference type="KEGG" id="ftf:FTF0334"/>
<dbReference type="HOGENOM" id="CLU_073626_1_1_6"/>
<dbReference type="GO" id="GO:0022627">
    <property type="term" value="C:cytosolic small ribosomal subunit"/>
    <property type="evidence" value="ECO:0007669"/>
    <property type="project" value="TreeGrafter"/>
</dbReference>
<dbReference type="GO" id="GO:0019843">
    <property type="term" value="F:rRNA binding"/>
    <property type="evidence" value="ECO:0007669"/>
    <property type="project" value="UniProtKB-UniRule"/>
</dbReference>
<dbReference type="GO" id="GO:0003735">
    <property type="term" value="F:structural constituent of ribosome"/>
    <property type="evidence" value="ECO:0007669"/>
    <property type="project" value="InterPro"/>
</dbReference>
<dbReference type="GO" id="GO:0006412">
    <property type="term" value="P:translation"/>
    <property type="evidence" value="ECO:0007669"/>
    <property type="project" value="UniProtKB-UniRule"/>
</dbReference>
<dbReference type="CDD" id="cd00364">
    <property type="entry name" value="Ribosomal_uS17"/>
    <property type="match status" value="1"/>
</dbReference>
<dbReference type="Gene3D" id="2.40.50.140">
    <property type="entry name" value="Nucleic acid-binding proteins"/>
    <property type="match status" value="1"/>
</dbReference>
<dbReference type="HAMAP" id="MF_01345_B">
    <property type="entry name" value="Ribosomal_uS17_B"/>
    <property type="match status" value="1"/>
</dbReference>
<dbReference type="InterPro" id="IPR012340">
    <property type="entry name" value="NA-bd_OB-fold"/>
</dbReference>
<dbReference type="InterPro" id="IPR000266">
    <property type="entry name" value="Ribosomal_uS17"/>
</dbReference>
<dbReference type="InterPro" id="IPR019984">
    <property type="entry name" value="Ribosomal_uS17_bact/chlr"/>
</dbReference>
<dbReference type="NCBIfam" id="NF004123">
    <property type="entry name" value="PRK05610.1"/>
    <property type="match status" value="1"/>
</dbReference>
<dbReference type="NCBIfam" id="TIGR03635">
    <property type="entry name" value="uS17_bact"/>
    <property type="match status" value="1"/>
</dbReference>
<dbReference type="PANTHER" id="PTHR10744">
    <property type="entry name" value="40S RIBOSOMAL PROTEIN S11 FAMILY MEMBER"/>
    <property type="match status" value="1"/>
</dbReference>
<dbReference type="PANTHER" id="PTHR10744:SF1">
    <property type="entry name" value="SMALL RIBOSOMAL SUBUNIT PROTEIN US17M"/>
    <property type="match status" value="1"/>
</dbReference>
<dbReference type="Pfam" id="PF00366">
    <property type="entry name" value="Ribosomal_S17"/>
    <property type="match status" value="1"/>
</dbReference>
<dbReference type="PRINTS" id="PR00973">
    <property type="entry name" value="RIBOSOMALS17"/>
</dbReference>
<dbReference type="SUPFAM" id="SSF50249">
    <property type="entry name" value="Nucleic acid-binding proteins"/>
    <property type="match status" value="1"/>
</dbReference>
<accession>Q14JB1</accession>
<sequence>MSDKIRLLEGKVSSVAMDKTVVVRAERYVKHPLYGKFVKKTTKYYVHDENNECKEGDVIKFKETRPYSKTKKWCLVDIIHREK</sequence>